<keyword id="KW-0175">Coiled coil</keyword>
<keyword id="KW-0344">Guanine-nucleotide releasing factor</keyword>
<keyword id="KW-1185">Reference proteome</keyword>
<reference key="1">
    <citation type="journal article" date="2002" name="Nature">
        <title>Sequence and analysis of chromosome 2 of Dictyostelium discoideum.</title>
        <authorList>
            <person name="Gloeckner G."/>
            <person name="Eichinger L."/>
            <person name="Szafranski K."/>
            <person name="Pachebat J.A."/>
            <person name="Bankier A.T."/>
            <person name="Dear P.H."/>
            <person name="Lehmann R."/>
            <person name="Baumgart C."/>
            <person name="Parra G."/>
            <person name="Abril J.F."/>
            <person name="Guigo R."/>
            <person name="Kumpf K."/>
            <person name="Tunggal B."/>
            <person name="Cox E.C."/>
            <person name="Quail M.A."/>
            <person name="Platzer M."/>
            <person name="Rosenthal A."/>
            <person name="Noegel A.A."/>
        </authorList>
    </citation>
    <scope>NUCLEOTIDE SEQUENCE [LARGE SCALE GENOMIC DNA]</scope>
    <source>
        <strain>AX4</strain>
    </source>
</reference>
<reference key="2">
    <citation type="journal article" date="2005" name="Nature">
        <title>The genome of the social amoeba Dictyostelium discoideum.</title>
        <authorList>
            <person name="Eichinger L."/>
            <person name="Pachebat J.A."/>
            <person name="Gloeckner G."/>
            <person name="Rajandream M.A."/>
            <person name="Sucgang R."/>
            <person name="Berriman M."/>
            <person name="Song J."/>
            <person name="Olsen R."/>
            <person name="Szafranski K."/>
            <person name="Xu Q."/>
            <person name="Tunggal B."/>
            <person name="Kummerfeld S."/>
            <person name="Madera M."/>
            <person name="Konfortov B.A."/>
            <person name="Rivero F."/>
            <person name="Bankier A.T."/>
            <person name="Lehmann R."/>
            <person name="Hamlin N."/>
            <person name="Davies R."/>
            <person name="Gaudet P."/>
            <person name="Fey P."/>
            <person name="Pilcher K."/>
            <person name="Chen G."/>
            <person name="Saunders D."/>
            <person name="Sodergren E.J."/>
            <person name="Davis P."/>
            <person name="Kerhornou A."/>
            <person name="Nie X."/>
            <person name="Hall N."/>
            <person name="Anjard C."/>
            <person name="Hemphill L."/>
            <person name="Bason N."/>
            <person name="Farbrother P."/>
            <person name="Desany B."/>
            <person name="Just E."/>
            <person name="Morio T."/>
            <person name="Rost R."/>
            <person name="Churcher C.M."/>
            <person name="Cooper J."/>
            <person name="Haydock S."/>
            <person name="van Driessche N."/>
            <person name="Cronin A."/>
            <person name="Goodhead I."/>
            <person name="Muzny D.M."/>
            <person name="Mourier T."/>
            <person name="Pain A."/>
            <person name="Lu M."/>
            <person name="Harper D."/>
            <person name="Lindsay R."/>
            <person name="Hauser H."/>
            <person name="James K.D."/>
            <person name="Quiles M."/>
            <person name="Madan Babu M."/>
            <person name="Saito T."/>
            <person name="Buchrieser C."/>
            <person name="Wardroper A."/>
            <person name="Felder M."/>
            <person name="Thangavelu M."/>
            <person name="Johnson D."/>
            <person name="Knights A."/>
            <person name="Loulseged H."/>
            <person name="Mungall K.L."/>
            <person name="Oliver K."/>
            <person name="Price C."/>
            <person name="Quail M.A."/>
            <person name="Urushihara H."/>
            <person name="Hernandez J."/>
            <person name="Rabbinowitsch E."/>
            <person name="Steffen D."/>
            <person name="Sanders M."/>
            <person name="Ma J."/>
            <person name="Kohara Y."/>
            <person name="Sharp S."/>
            <person name="Simmonds M.N."/>
            <person name="Spiegler S."/>
            <person name="Tivey A."/>
            <person name="Sugano S."/>
            <person name="White B."/>
            <person name="Walker D."/>
            <person name="Woodward J.R."/>
            <person name="Winckler T."/>
            <person name="Tanaka Y."/>
            <person name="Shaulsky G."/>
            <person name="Schleicher M."/>
            <person name="Weinstock G.M."/>
            <person name="Rosenthal A."/>
            <person name="Cox E.C."/>
            <person name="Chisholm R.L."/>
            <person name="Gibbs R.A."/>
            <person name="Loomis W.F."/>
            <person name="Platzer M."/>
            <person name="Kay R.R."/>
            <person name="Williams J.G."/>
            <person name="Dear P.H."/>
            <person name="Noegel A.A."/>
            <person name="Barrell B.G."/>
            <person name="Kuspa A."/>
        </authorList>
    </citation>
    <scope>NUCLEOTIDE SEQUENCE [LARGE SCALE GENOMIC DNA]</scope>
    <source>
        <strain>AX4</strain>
    </source>
</reference>
<reference key="3">
    <citation type="journal article" date="2005" name="Genome Biol.">
        <title>The Dictyostelium genome encodes numerous RasGEFs with multiple biological roles.</title>
        <authorList>
            <person name="Wilkins A."/>
            <person name="Szafranski K."/>
            <person name="Fraser D.J."/>
            <person name="Bakthavatsalam D."/>
            <person name="Mueller R."/>
            <person name="Fisher P.R."/>
            <person name="Gloeckner G."/>
            <person name="Eichinger L."/>
            <person name="Noegel A.A."/>
            <person name="Insall R.H."/>
        </authorList>
    </citation>
    <scope>DEVELOPMENTAL STAGE</scope>
</reference>
<reference key="4">
    <citation type="journal article" date="2006" name="J. Proteome Res.">
        <title>Identification of novel centrosomal proteins in Dictyostelium discoideum by comparative proteomic approaches.</title>
        <authorList>
            <person name="Reinders Y."/>
            <person name="Schulz I."/>
            <person name="Graef R."/>
            <person name="Sickmann A."/>
        </authorList>
    </citation>
    <scope>IDENTIFICATION BY MASS SPECTROMETRY [LARGE SCALE ANALYSIS]</scope>
</reference>
<feature type="chain" id="PRO_0000384480" description="Ras guanine nucleotide exchange factor Y">
    <location>
        <begin position="1"/>
        <end position="1508"/>
    </location>
</feature>
<feature type="domain" description="N-terminal Ras-GEF" evidence="3">
    <location>
        <begin position="1074"/>
        <end position="1234"/>
    </location>
</feature>
<feature type="domain" description="Ras-GEF" evidence="4">
    <location>
        <begin position="1278"/>
        <end position="1508"/>
    </location>
</feature>
<feature type="region of interest" description="Disordered" evidence="5">
    <location>
        <begin position="1"/>
        <end position="73"/>
    </location>
</feature>
<feature type="region of interest" description="Disordered" evidence="5">
    <location>
        <begin position="128"/>
        <end position="182"/>
    </location>
</feature>
<feature type="region of interest" description="Disordered" evidence="5">
    <location>
        <begin position="197"/>
        <end position="272"/>
    </location>
</feature>
<feature type="region of interest" description="Disordered" evidence="5">
    <location>
        <begin position="396"/>
        <end position="517"/>
    </location>
</feature>
<feature type="region of interest" description="Disordered" evidence="5">
    <location>
        <begin position="565"/>
        <end position="593"/>
    </location>
</feature>
<feature type="region of interest" description="Disordered" evidence="5">
    <location>
        <begin position="606"/>
        <end position="727"/>
    </location>
</feature>
<feature type="region of interest" description="Disordered" evidence="5">
    <location>
        <begin position="831"/>
        <end position="1021"/>
    </location>
</feature>
<feature type="region of interest" description="Disordered" evidence="5">
    <location>
        <begin position="1153"/>
        <end position="1172"/>
    </location>
</feature>
<feature type="coiled-coil region" evidence="2">
    <location>
        <begin position="659"/>
        <end position="686"/>
    </location>
</feature>
<feature type="compositionally biased region" description="Low complexity" evidence="5">
    <location>
        <begin position="9"/>
        <end position="22"/>
    </location>
</feature>
<feature type="compositionally biased region" description="Low complexity" evidence="5">
    <location>
        <begin position="33"/>
        <end position="72"/>
    </location>
</feature>
<feature type="compositionally biased region" description="Polar residues" evidence="5">
    <location>
        <begin position="128"/>
        <end position="150"/>
    </location>
</feature>
<feature type="compositionally biased region" description="Polar residues" evidence="5">
    <location>
        <begin position="172"/>
        <end position="182"/>
    </location>
</feature>
<feature type="compositionally biased region" description="Low complexity" evidence="5">
    <location>
        <begin position="199"/>
        <end position="216"/>
    </location>
</feature>
<feature type="compositionally biased region" description="Basic and acidic residues" evidence="5">
    <location>
        <begin position="223"/>
        <end position="232"/>
    </location>
</feature>
<feature type="compositionally biased region" description="Acidic residues" evidence="5">
    <location>
        <begin position="233"/>
        <end position="250"/>
    </location>
</feature>
<feature type="compositionally biased region" description="Low complexity" evidence="5">
    <location>
        <begin position="255"/>
        <end position="272"/>
    </location>
</feature>
<feature type="compositionally biased region" description="Basic and acidic residues" evidence="5">
    <location>
        <begin position="399"/>
        <end position="409"/>
    </location>
</feature>
<feature type="compositionally biased region" description="Low complexity" evidence="5">
    <location>
        <begin position="413"/>
        <end position="447"/>
    </location>
</feature>
<feature type="compositionally biased region" description="Pro residues" evidence="5">
    <location>
        <begin position="465"/>
        <end position="475"/>
    </location>
</feature>
<feature type="compositionally biased region" description="Polar residues" evidence="5">
    <location>
        <begin position="492"/>
        <end position="510"/>
    </location>
</feature>
<feature type="compositionally biased region" description="Low complexity" evidence="5">
    <location>
        <begin position="574"/>
        <end position="593"/>
    </location>
</feature>
<feature type="compositionally biased region" description="Low complexity" evidence="5">
    <location>
        <begin position="606"/>
        <end position="660"/>
    </location>
</feature>
<feature type="compositionally biased region" description="Low complexity" evidence="5">
    <location>
        <begin position="668"/>
        <end position="687"/>
    </location>
</feature>
<feature type="compositionally biased region" description="Low complexity" evidence="5">
    <location>
        <begin position="831"/>
        <end position="855"/>
    </location>
</feature>
<feature type="compositionally biased region" description="Low complexity" evidence="5">
    <location>
        <begin position="862"/>
        <end position="891"/>
    </location>
</feature>
<feature type="compositionally biased region" description="Low complexity" evidence="5">
    <location>
        <begin position="942"/>
        <end position="984"/>
    </location>
</feature>
<feature type="compositionally biased region" description="Low complexity" evidence="5">
    <location>
        <begin position="993"/>
        <end position="1019"/>
    </location>
</feature>
<feature type="compositionally biased region" description="Low complexity" evidence="5">
    <location>
        <begin position="1160"/>
        <end position="1172"/>
    </location>
</feature>
<gene>
    <name type="primary">gefY</name>
    <name type="synonym">rasGEFY</name>
    <name type="ORF">DDB_G0276019</name>
</gene>
<sequence>MIIIGVKRNINNSNNSNSNNNSNKKKDKIMSHNNNNTITGKNTNEIMNNNNNSNNNNNNNNNNNNNNNNNNNEEVKTEPIQQILKRLNSKNKIEVGATPNDIPTSIPSVKNLGKKYDSKAETHLLNQKVLSSPSKEVNSLKKSTNGTNTIPSSSIPSSPPSSPPSSSSLSSDRTSQDIPKSVNGLTASIVAKFSKNIDNNTTNNNSNNNNNSSLSTPIQSPRDSLETNPIKDEESEESEESEESKEEEEELKMGIKTTKTTSETIESSYSTSQLLKNDLIQEKGDDNNNIQEPQQPKYPTQTSFITDKSKRLSTPPINGTSISIGNNNNNNNNYINGNSGINTIPRNFQSHRVAGDWKDRKLNTLFTQGTVGGNGQNGTVRKNLIGTRELSTSSGILQCKDDSSSKDQDFEFNNSAGSSGNSSASNSNRNSIAFSSSNHFSSESSQSAPTLPIYNPSQYTSPSTPQSPSPSPSPPLISSKSIYINKPPPPHFNQQTNFSVSPTKSPSNEKQQQEDEDVKHLVRAFTNRKLNVHHAERKSKISVQDAEWIVKKFFHDTDRQSKFVLSENRTKDLNQPSSQFSPSTSPSTNSIPTNLLLSNKRLSTSLPNINTNINNSSNNTSSSSSSSSTTSSPSPLTTSSSTSVLPPPLSSSSSSQLTESLKTRIEENNNNNNNKNINNNNNNNNNNGRNSIHDSQEMTELEDPHSSPSYRHLEEVGKKKYVSAEPSRRPGIKTPLFLNVPTLAMPTQFHQIPPERVSSNLFSVSVEENSYPDNPLLFNQQIINRVANDKDLSYLFFPVLKSSTKITSSTLNNIIPINKLNNQIHNNNNNNVIISNNTGNNNNNNNSSKNNNTVKGNKKQQNKSSSSSQNNSPPSDFSLSVSPSPCSSLTPSPSPSPSSPLIESSMFTKDLSPPPPAAAAIVLQQPVATTNNKSTDKDSRKSLWSSMKSSKPPISTSQPSTIQDTISTSPPSTSTSPTSNSPPTSISPPPPSITTGSSPPSTAGTSPPNDNGNNNNNSNKELTISIPITNVNVHESNIVVASTPRSGRDLATIVAEEFKDRTDIVFCTQHLSMNRIKVRSASLDAMIDLLTNHRLSQPDLVESFLLTYKTFTSPLAVLTKLIERYEETDNINNNNNNNNDDLIISTRTTATITNEDEDNSNSNSNSNKTNKNSSRTIKLGVLSIIKCWVDRHHYDFERNKALLSAIVAFLEGPVIDDGMEKVSNIILKIIDRKANEAEARRTGTALVMHTSTSHCKFPPSIPPSLSKPDQIPTLQNFDDLEIARQLTLIEHEAYSMVKPNECINLAFSKSDKEIRAPNIINIIKRSNLLPLWVATEIVQEERLTKRANIIKKFISIADQCKNLNNFNAVMEILSGLNLTPVFRLKKTWETLPRKYLATFRHLNSLMAPKFNFKVYRDVLHTKNLPCLPFLGVYLTDLTFLEEGSFDQAENGLINIVKRTQIANIIQEIQQYQQLSYSFAPVPIIKDFLLQIGGLQERALYKQSKIIEP</sequence>
<proteinExistence type="evidence at protein level"/>
<evidence type="ECO:0000250" key="1"/>
<evidence type="ECO:0000255" key="2"/>
<evidence type="ECO:0000255" key="3">
    <source>
        <dbReference type="PROSITE-ProRule" id="PRU00135"/>
    </source>
</evidence>
<evidence type="ECO:0000255" key="4">
    <source>
        <dbReference type="PROSITE-ProRule" id="PRU00168"/>
    </source>
</evidence>
<evidence type="ECO:0000256" key="5">
    <source>
        <dbReference type="SAM" id="MobiDB-lite"/>
    </source>
</evidence>
<evidence type="ECO:0000269" key="6">
    <source>
    </source>
</evidence>
<evidence type="ECO:0000305" key="7"/>
<comment type="function">
    <text evidence="1">Promotes the exchange of Ras-bound GDP by GTP.</text>
</comment>
<comment type="developmental stage">
    <text evidence="6">Expressed during development; with a peak between 8-12 hours of development.</text>
</comment>
<comment type="sequence caution" evidence="7">
    <conflict type="erroneous gene model prediction">
        <sequence resource="EMBL-CDS" id="EAL69466"/>
    </conflict>
</comment>
<dbReference type="EMBL" id="AAFI02000013">
    <property type="protein sequence ID" value="EAL69466.1"/>
    <property type="status" value="ALT_SEQ"/>
    <property type="molecule type" value="Genomic_DNA"/>
</dbReference>
<dbReference type="RefSeq" id="XP_643387.1">
    <property type="nucleotide sequence ID" value="XM_638295.1"/>
</dbReference>
<dbReference type="SMR" id="Q552M5"/>
<dbReference type="FunCoup" id="Q552M5">
    <property type="interactions" value="452"/>
</dbReference>
<dbReference type="IntAct" id="Q552M5">
    <property type="interactions" value="1"/>
</dbReference>
<dbReference type="STRING" id="44689.Q552M5"/>
<dbReference type="PaxDb" id="44689-DDB0238867"/>
<dbReference type="EnsemblProtists" id="EAL69466">
    <property type="protein sequence ID" value="EAL69466"/>
    <property type="gene ID" value="DDB_G0276019"/>
</dbReference>
<dbReference type="GeneID" id="8620272"/>
<dbReference type="KEGG" id="ddi:DDB_G0276019"/>
<dbReference type="dictyBase" id="DDB_G0276019">
    <property type="gene designation" value="gefY"/>
</dbReference>
<dbReference type="VEuPathDB" id="AmoebaDB:DDB_G0276019"/>
<dbReference type="eggNOG" id="KOG3417">
    <property type="taxonomic scope" value="Eukaryota"/>
</dbReference>
<dbReference type="InParanoid" id="Q552M5"/>
<dbReference type="Reactome" id="R-DDI-193648">
    <property type="pathway name" value="NRAGE signals death through JNK"/>
</dbReference>
<dbReference type="Reactome" id="R-DDI-9013148">
    <property type="pathway name" value="CDC42 GTPase cycle"/>
</dbReference>
<dbReference type="Reactome" id="R-DDI-9013149">
    <property type="pathway name" value="RAC1 GTPase cycle"/>
</dbReference>
<dbReference type="PRO" id="PR:Q552M5"/>
<dbReference type="Proteomes" id="UP000002195">
    <property type="component" value="Chromosome 2"/>
</dbReference>
<dbReference type="GO" id="GO:0005886">
    <property type="term" value="C:plasma membrane"/>
    <property type="evidence" value="ECO:0000318"/>
    <property type="project" value="GO_Central"/>
</dbReference>
<dbReference type="GO" id="GO:0005085">
    <property type="term" value="F:guanyl-nucleotide exchange factor activity"/>
    <property type="evidence" value="ECO:0000318"/>
    <property type="project" value="GO_Central"/>
</dbReference>
<dbReference type="GO" id="GO:0007265">
    <property type="term" value="P:Ras protein signal transduction"/>
    <property type="evidence" value="ECO:0000318"/>
    <property type="project" value="GO_Central"/>
</dbReference>
<dbReference type="CDD" id="cd00155">
    <property type="entry name" value="RasGEF"/>
    <property type="match status" value="1"/>
</dbReference>
<dbReference type="CDD" id="cd06224">
    <property type="entry name" value="REM"/>
    <property type="match status" value="1"/>
</dbReference>
<dbReference type="Gene3D" id="1.10.840.10">
    <property type="entry name" value="Ras guanine-nucleotide exchange factors catalytic domain"/>
    <property type="match status" value="1"/>
</dbReference>
<dbReference type="Gene3D" id="1.20.870.10">
    <property type="entry name" value="Son of sevenless (SoS) protein Chain: S domain 1"/>
    <property type="match status" value="1"/>
</dbReference>
<dbReference type="InterPro" id="IPR008937">
    <property type="entry name" value="Ras-like_GEF"/>
</dbReference>
<dbReference type="InterPro" id="IPR000651">
    <property type="entry name" value="Ras-like_Gua-exchang_fac_N"/>
</dbReference>
<dbReference type="InterPro" id="IPR023578">
    <property type="entry name" value="Ras_GEF_dom_sf"/>
</dbReference>
<dbReference type="InterPro" id="IPR001895">
    <property type="entry name" value="RASGEF_cat_dom"/>
</dbReference>
<dbReference type="InterPro" id="IPR036964">
    <property type="entry name" value="RASGEF_cat_dom_sf"/>
</dbReference>
<dbReference type="PANTHER" id="PTHR23113">
    <property type="entry name" value="GUANINE NUCLEOTIDE EXCHANGE FACTOR"/>
    <property type="match status" value="1"/>
</dbReference>
<dbReference type="PANTHER" id="PTHR23113:SF319">
    <property type="entry name" value="RAS GUANINE NUCLEOTIDE EXCHANGE FACTOR Y"/>
    <property type="match status" value="1"/>
</dbReference>
<dbReference type="Pfam" id="PF00617">
    <property type="entry name" value="RasGEF"/>
    <property type="match status" value="1"/>
</dbReference>
<dbReference type="Pfam" id="PF00618">
    <property type="entry name" value="RasGEF_N"/>
    <property type="match status" value="1"/>
</dbReference>
<dbReference type="SMART" id="SM00147">
    <property type="entry name" value="RasGEF"/>
    <property type="match status" value="1"/>
</dbReference>
<dbReference type="SMART" id="SM00229">
    <property type="entry name" value="RasGEFN"/>
    <property type="match status" value="1"/>
</dbReference>
<dbReference type="SUPFAM" id="SSF48366">
    <property type="entry name" value="Ras GEF"/>
    <property type="match status" value="1"/>
</dbReference>
<dbReference type="PROSITE" id="PS50009">
    <property type="entry name" value="RASGEF_CAT"/>
    <property type="match status" value="1"/>
</dbReference>
<dbReference type="PROSITE" id="PS50212">
    <property type="entry name" value="RASGEF_NTER"/>
    <property type="match status" value="1"/>
</dbReference>
<protein>
    <recommendedName>
        <fullName>Ras guanine nucleotide exchange factor Y</fullName>
    </recommendedName>
    <alternativeName>
        <fullName>RasGEF domain-containing protein Y</fullName>
    </alternativeName>
</protein>
<organism>
    <name type="scientific">Dictyostelium discoideum</name>
    <name type="common">Social amoeba</name>
    <dbReference type="NCBI Taxonomy" id="44689"/>
    <lineage>
        <taxon>Eukaryota</taxon>
        <taxon>Amoebozoa</taxon>
        <taxon>Evosea</taxon>
        <taxon>Eumycetozoa</taxon>
        <taxon>Dictyostelia</taxon>
        <taxon>Dictyosteliales</taxon>
        <taxon>Dictyosteliaceae</taxon>
        <taxon>Dictyostelium</taxon>
    </lineage>
</organism>
<accession>Q552M5</accession>
<accession>Q86JC7</accession>
<name>GEFY_DICDI</name>